<protein>
    <recommendedName>
        <fullName>Uncharacterized protein AF_1557</fullName>
    </recommendedName>
</protein>
<evidence type="ECO:0000255" key="1"/>
<evidence type="ECO:0000256" key="2">
    <source>
        <dbReference type="SAM" id="MobiDB-lite"/>
    </source>
</evidence>
<dbReference type="EMBL" id="AE000782">
    <property type="protein sequence ID" value="AAB89699.1"/>
    <property type="molecule type" value="Genomic_DNA"/>
</dbReference>
<dbReference type="PIR" id="D69444">
    <property type="entry name" value="D69444"/>
</dbReference>
<dbReference type="RefSeq" id="WP_010879054.1">
    <property type="nucleotide sequence ID" value="NC_000917.1"/>
</dbReference>
<dbReference type="SMR" id="O28715"/>
<dbReference type="STRING" id="224325.AF_1557"/>
<dbReference type="PaxDb" id="224325-AF_1557"/>
<dbReference type="DNASU" id="1484785"/>
<dbReference type="EnsemblBacteria" id="AAB89699">
    <property type="protein sequence ID" value="AAB89699"/>
    <property type="gene ID" value="AF_1557"/>
</dbReference>
<dbReference type="GeneID" id="1484785"/>
<dbReference type="KEGG" id="afu:AF_1557"/>
<dbReference type="eggNOG" id="arCOG06890">
    <property type="taxonomic scope" value="Archaea"/>
</dbReference>
<dbReference type="HOGENOM" id="CLU_1590779_0_0_2"/>
<dbReference type="Proteomes" id="UP000002199">
    <property type="component" value="Chromosome"/>
</dbReference>
<proteinExistence type="predicted"/>
<accession>O28715</accession>
<keyword id="KW-0175">Coiled coil</keyword>
<keyword id="KW-1185">Reference proteome</keyword>
<gene>
    <name type="ordered locus">AF_1557</name>
</gene>
<organism>
    <name type="scientific">Archaeoglobus fulgidus (strain ATCC 49558 / DSM 4304 / JCM 9628 / NBRC 100126 / VC-16)</name>
    <dbReference type="NCBI Taxonomy" id="224325"/>
    <lineage>
        <taxon>Archaea</taxon>
        <taxon>Methanobacteriati</taxon>
        <taxon>Methanobacteriota</taxon>
        <taxon>Archaeoglobi</taxon>
        <taxon>Archaeoglobales</taxon>
        <taxon>Archaeoglobaceae</taxon>
        <taxon>Archaeoglobus</taxon>
    </lineage>
</organism>
<reference key="1">
    <citation type="journal article" date="1997" name="Nature">
        <title>The complete genome sequence of the hyperthermophilic, sulphate-reducing archaeon Archaeoglobus fulgidus.</title>
        <authorList>
            <person name="Klenk H.-P."/>
            <person name="Clayton R.A."/>
            <person name="Tomb J.-F."/>
            <person name="White O."/>
            <person name="Nelson K.E."/>
            <person name="Ketchum K.A."/>
            <person name="Dodson R.J."/>
            <person name="Gwinn M.L."/>
            <person name="Hickey E.K."/>
            <person name="Peterson J.D."/>
            <person name="Richardson D.L."/>
            <person name="Kerlavage A.R."/>
            <person name="Graham D.E."/>
            <person name="Kyrpides N.C."/>
            <person name="Fleischmann R.D."/>
            <person name="Quackenbush J."/>
            <person name="Lee N.H."/>
            <person name="Sutton G.G."/>
            <person name="Gill S.R."/>
            <person name="Kirkness E.F."/>
            <person name="Dougherty B.A."/>
            <person name="McKenney K."/>
            <person name="Adams M.D."/>
            <person name="Loftus B.J."/>
            <person name="Peterson S.N."/>
            <person name="Reich C.I."/>
            <person name="McNeil L.K."/>
            <person name="Badger J.H."/>
            <person name="Glodek A."/>
            <person name="Zhou L."/>
            <person name="Overbeek R."/>
            <person name="Gocayne J.D."/>
            <person name="Weidman J.F."/>
            <person name="McDonald L.A."/>
            <person name="Utterback T.R."/>
            <person name="Cotton M.D."/>
            <person name="Spriggs T."/>
            <person name="Artiach P."/>
            <person name="Kaine B.P."/>
            <person name="Sykes S.M."/>
            <person name="Sadow P.W."/>
            <person name="D'Andrea K.P."/>
            <person name="Bowman C."/>
            <person name="Fujii C."/>
            <person name="Garland S.A."/>
            <person name="Mason T.M."/>
            <person name="Olsen G.J."/>
            <person name="Fraser C.M."/>
            <person name="Smith H.O."/>
            <person name="Woese C.R."/>
            <person name="Venter J.C."/>
        </authorList>
    </citation>
    <scope>NUCLEOTIDE SEQUENCE [LARGE SCALE GENOMIC DNA]</scope>
    <source>
        <strain>ATCC 49558 / DSM 4304 / JCM 9628 / NBRC 100126 / VC-16</strain>
    </source>
</reference>
<sequence>MSERDILIERLERKLAEKERELVELRRMNREELEKIKREIAMEAKEEVLREVHKLLQNSQIQRLSEVDSKIVELRKAMESIITELAYIKGELKGLQEKGESKVERKEIIEEKIQKAMVFENEPLYLEEKEERKPAKESKRREHDVIIPEGKKEERTDDGEDGLIVCD</sequence>
<name>Y1557_ARCFU</name>
<feature type="chain" id="PRO_0000128021" description="Uncharacterized protein AF_1557">
    <location>
        <begin position="1"/>
        <end position="167"/>
    </location>
</feature>
<feature type="region of interest" description="Disordered" evidence="2">
    <location>
        <begin position="128"/>
        <end position="167"/>
    </location>
</feature>
<feature type="coiled-coil region" evidence="1">
    <location>
        <begin position="70"/>
        <end position="118"/>
    </location>
</feature>
<feature type="compositionally biased region" description="Basic and acidic residues" evidence="2">
    <location>
        <begin position="128"/>
        <end position="155"/>
    </location>
</feature>